<reference key="1">
    <citation type="journal article" date="2004" name="Proc. Natl. Acad. Sci. U.S.A.">
        <title>Complete genomes of two clinical Staphylococcus aureus strains: evidence for the rapid evolution of virulence and drug resistance.</title>
        <authorList>
            <person name="Holden M.T.G."/>
            <person name="Feil E.J."/>
            <person name="Lindsay J.A."/>
            <person name="Peacock S.J."/>
            <person name="Day N.P.J."/>
            <person name="Enright M.C."/>
            <person name="Foster T.J."/>
            <person name="Moore C.E."/>
            <person name="Hurst L."/>
            <person name="Atkin R."/>
            <person name="Barron A."/>
            <person name="Bason N."/>
            <person name="Bentley S.D."/>
            <person name="Chillingworth C."/>
            <person name="Chillingworth T."/>
            <person name="Churcher C."/>
            <person name="Clark L."/>
            <person name="Corton C."/>
            <person name="Cronin A."/>
            <person name="Doggett J."/>
            <person name="Dowd L."/>
            <person name="Feltwell T."/>
            <person name="Hance Z."/>
            <person name="Harris B."/>
            <person name="Hauser H."/>
            <person name="Holroyd S."/>
            <person name="Jagels K."/>
            <person name="James K.D."/>
            <person name="Lennard N."/>
            <person name="Line A."/>
            <person name="Mayes R."/>
            <person name="Moule S."/>
            <person name="Mungall K."/>
            <person name="Ormond D."/>
            <person name="Quail M.A."/>
            <person name="Rabbinowitsch E."/>
            <person name="Rutherford K.M."/>
            <person name="Sanders M."/>
            <person name="Sharp S."/>
            <person name="Simmonds M."/>
            <person name="Stevens K."/>
            <person name="Whitehead S."/>
            <person name="Barrell B.G."/>
            <person name="Spratt B.G."/>
            <person name="Parkhill J."/>
        </authorList>
    </citation>
    <scope>NUCLEOTIDE SEQUENCE [LARGE SCALE GENOMIC DNA]</scope>
    <source>
        <strain>MRSA252</strain>
    </source>
</reference>
<evidence type="ECO:0000250" key="1"/>
<evidence type="ECO:0000255" key="2">
    <source>
        <dbReference type="HAMAP-Rule" id="MF_01491"/>
    </source>
</evidence>
<name>RNJ1_STAAR</name>
<accession>Q6GHZ6</accession>
<organism>
    <name type="scientific">Staphylococcus aureus (strain MRSA252)</name>
    <dbReference type="NCBI Taxonomy" id="282458"/>
    <lineage>
        <taxon>Bacteria</taxon>
        <taxon>Bacillati</taxon>
        <taxon>Bacillota</taxon>
        <taxon>Bacilli</taxon>
        <taxon>Bacillales</taxon>
        <taxon>Staphylococcaceae</taxon>
        <taxon>Staphylococcus</taxon>
    </lineage>
</organism>
<keyword id="KW-0963">Cytoplasm</keyword>
<keyword id="KW-0255">Endonuclease</keyword>
<keyword id="KW-0269">Exonuclease</keyword>
<keyword id="KW-0378">Hydrolase</keyword>
<keyword id="KW-0479">Metal-binding</keyword>
<keyword id="KW-0540">Nuclease</keyword>
<keyword id="KW-0694">RNA-binding</keyword>
<keyword id="KW-0698">rRNA processing</keyword>
<keyword id="KW-0862">Zinc</keyword>
<comment type="function">
    <text evidence="1">An RNase that has 5'-3' exonuclease and possibly endoonuclease activity. Involved in maturation of rRNA and in some organisms also mRNA maturation and/or decay (By similarity).</text>
</comment>
<comment type="cofactor">
    <cofactor evidence="2">
        <name>Zn(2+)</name>
        <dbReference type="ChEBI" id="CHEBI:29105"/>
    </cofactor>
    <text evidence="2">Binds up to 2 Zn(2+) ions per subunit. It is not clear if Zn(2+) or Mg(2+) is physiologically important.</text>
</comment>
<comment type="subunit">
    <text evidence="2">Homodimer, may be a subunit of the RNA degradosome.</text>
</comment>
<comment type="interaction">
    <interactant intactId="EBI-6415308">
        <id>Q6GHZ6</id>
    </interactant>
    <interactant intactId="EBI-6415302">
        <id>Q6GHG0</id>
        <label>rnj2</label>
    </interactant>
    <organismsDiffer>false</organismsDiffer>
    <experiments>4</experiments>
</comment>
<comment type="subcellular location">
    <subcellularLocation>
        <location evidence="2">Cytoplasm</location>
    </subcellularLocation>
</comment>
<comment type="similarity">
    <text evidence="2">Belongs to the metallo-beta-lactamase superfamily. RNA-metabolizing metallo-beta-lactamase-like family. Bacterial RNase J subfamily.</text>
</comment>
<sequence>MKQLHPNEVGVYALGGLGEIGKNTYAVEYKDEIVIIDAGIKFPDDNLLGIDYVIPDYTYLVQNQDKIVGLFITHGHEDHIGGVPFLLKQLNIPIYGGPLALGLIRNKLEEHHLLRTAKLNEINEDSVIKSKHFTISFYLTTHSIPETYGVIVDTPEGKVVHTGDFKFDFTPVGKPANIAKMAQLGEEGVLCLLSDSTNSLVPDFTLSEREVGQNVDKIFRNCKGRIIFATFASNIYRVQQAVEAAIKNNRKIVTFGRSMENNIKIGMELGYIKAPPETFIEPNKINTVPKHELLILCTGSQGEPMAALSRIANGTHKQIKIIPEDTVVFSSSPIPGNTKSINRTINSLYKAGADVIHSKISNIHTSGHGSQGDQQLMLRLIKPKYFLPIHGEYRMLKAHGETGVECGVEEDNVFIFDIGDVLALTHDSARKAGRIPSGNVLVDGSGIGDIGNVVIRDRKLLSEEGLVIVVVSIDFNTNKLLSGPDIISRGFVYMRESGQLIYDAQRKIKTDVISKLNQNKDIQWHQIKSSIIETLQPYLFEKTARKPMILPVIMKVNEQKESNNK</sequence>
<dbReference type="EC" id="3.1.-.-" evidence="2"/>
<dbReference type="EMBL" id="BX571856">
    <property type="protein sequence ID" value="CAG40065.1"/>
    <property type="molecule type" value="Genomic_DNA"/>
</dbReference>
<dbReference type="SMR" id="Q6GHZ6"/>
<dbReference type="IntAct" id="Q6GHZ6">
    <property type="interactions" value="1"/>
</dbReference>
<dbReference type="KEGG" id="sar:SAR1063"/>
<dbReference type="HOGENOM" id="CLU_008727_3_1_9"/>
<dbReference type="Proteomes" id="UP000000596">
    <property type="component" value="Chromosome"/>
</dbReference>
<dbReference type="GO" id="GO:0005737">
    <property type="term" value="C:cytoplasm"/>
    <property type="evidence" value="ECO:0007669"/>
    <property type="project" value="UniProtKB-SubCell"/>
</dbReference>
<dbReference type="GO" id="GO:0004534">
    <property type="term" value="F:5'-3' RNA exonuclease activity"/>
    <property type="evidence" value="ECO:0007669"/>
    <property type="project" value="UniProtKB-UniRule"/>
</dbReference>
<dbReference type="GO" id="GO:0003723">
    <property type="term" value="F:RNA binding"/>
    <property type="evidence" value="ECO:0007669"/>
    <property type="project" value="UniProtKB-UniRule"/>
</dbReference>
<dbReference type="GO" id="GO:0004521">
    <property type="term" value="F:RNA endonuclease activity"/>
    <property type="evidence" value="ECO:0007669"/>
    <property type="project" value="UniProtKB-UniRule"/>
</dbReference>
<dbReference type="GO" id="GO:0008270">
    <property type="term" value="F:zinc ion binding"/>
    <property type="evidence" value="ECO:0007669"/>
    <property type="project" value="InterPro"/>
</dbReference>
<dbReference type="GO" id="GO:0006364">
    <property type="term" value="P:rRNA processing"/>
    <property type="evidence" value="ECO:0007669"/>
    <property type="project" value="UniProtKB-UniRule"/>
</dbReference>
<dbReference type="CDD" id="cd07714">
    <property type="entry name" value="RNaseJ_MBL-fold"/>
    <property type="match status" value="1"/>
</dbReference>
<dbReference type="FunFam" id="3.10.20.580:FF:000001">
    <property type="entry name" value="Ribonuclease J"/>
    <property type="match status" value="1"/>
</dbReference>
<dbReference type="Gene3D" id="3.10.20.580">
    <property type="match status" value="1"/>
</dbReference>
<dbReference type="Gene3D" id="3.40.50.10710">
    <property type="entry name" value="Metallo-hydrolase/oxidoreductase"/>
    <property type="match status" value="1"/>
</dbReference>
<dbReference type="Gene3D" id="3.60.15.10">
    <property type="entry name" value="Ribonuclease Z/Hydroxyacylglutathione hydrolase-like"/>
    <property type="match status" value="1"/>
</dbReference>
<dbReference type="HAMAP" id="MF_01491">
    <property type="entry name" value="RNase_J_bact"/>
    <property type="match status" value="1"/>
</dbReference>
<dbReference type="InterPro" id="IPR001279">
    <property type="entry name" value="Metallo-B-lactamas"/>
</dbReference>
<dbReference type="InterPro" id="IPR036866">
    <property type="entry name" value="RibonucZ/Hydroxyglut_hydro"/>
</dbReference>
<dbReference type="InterPro" id="IPR011108">
    <property type="entry name" value="RMMBL"/>
</dbReference>
<dbReference type="InterPro" id="IPR004613">
    <property type="entry name" value="RNase_J"/>
</dbReference>
<dbReference type="InterPro" id="IPR042173">
    <property type="entry name" value="RNase_J_2"/>
</dbReference>
<dbReference type="InterPro" id="IPR055132">
    <property type="entry name" value="RNase_J_b_CASP"/>
</dbReference>
<dbReference type="InterPro" id="IPR030854">
    <property type="entry name" value="RNase_J_bac"/>
</dbReference>
<dbReference type="InterPro" id="IPR041636">
    <property type="entry name" value="RNase_J_C"/>
</dbReference>
<dbReference type="InterPro" id="IPR001587">
    <property type="entry name" value="RNase_J_CS"/>
</dbReference>
<dbReference type="NCBIfam" id="TIGR00649">
    <property type="entry name" value="MG423"/>
    <property type="match status" value="1"/>
</dbReference>
<dbReference type="NCBIfam" id="NF047419">
    <property type="entry name" value="RNase_J1_RnjA"/>
    <property type="match status" value="1"/>
</dbReference>
<dbReference type="PANTHER" id="PTHR43694">
    <property type="entry name" value="RIBONUCLEASE J"/>
    <property type="match status" value="1"/>
</dbReference>
<dbReference type="PANTHER" id="PTHR43694:SF1">
    <property type="entry name" value="RIBONUCLEASE J"/>
    <property type="match status" value="1"/>
</dbReference>
<dbReference type="Pfam" id="PF00753">
    <property type="entry name" value="Lactamase_B"/>
    <property type="match status" value="1"/>
</dbReference>
<dbReference type="Pfam" id="PF07521">
    <property type="entry name" value="RMMBL"/>
    <property type="match status" value="1"/>
</dbReference>
<dbReference type="Pfam" id="PF22505">
    <property type="entry name" value="RNase_J_b_CASP"/>
    <property type="match status" value="1"/>
</dbReference>
<dbReference type="Pfam" id="PF17770">
    <property type="entry name" value="RNase_J_C"/>
    <property type="match status" value="1"/>
</dbReference>
<dbReference type="PIRSF" id="PIRSF004803">
    <property type="entry name" value="RnjA"/>
    <property type="match status" value="1"/>
</dbReference>
<dbReference type="SMART" id="SM00849">
    <property type="entry name" value="Lactamase_B"/>
    <property type="match status" value="1"/>
</dbReference>
<dbReference type="SUPFAM" id="SSF56281">
    <property type="entry name" value="Metallo-hydrolase/oxidoreductase"/>
    <property type="match status" value="1"/>
</dbReference>
<dbReference type="PROSITE" id="PS01292">
    <property type="entry name" value="UPF0036"/>
    <property type="match status" value="1"/>
</dbReference>
<protein>
    <recommendedName>
        <fullName evidence="2">Ribonuclease J 1</fullName>
        <shortName evidence="2">RNase J1</shortName>
        <ecNumber evidence="2">3.1.-.-</ecNumber>
    </recommendedName>
</protein>
<gene>
    <name evidence="2" type="primary">rnj1</name>
    <name type="ordered locus">SAR1063</name>
</gene>
<proteinExistence type="evidence at protein level"/>
<feature type="chain" id="PRO_0000286846" description="Ribonuclease J 1">
    <location>
        <begin position="1"/>
        <end position="565"/>
    </location>
</feature>
<feature type="binding site" evidence="2">
    <location>
        <position position="74"/>
    </location>
    <ligand>
        <name>Zn(2+)</name>
        <dbReference type="ChEBI" id="CHEBI:29105"/>
        <label>1</label>
        <note>catalytic</note>
    </ligand>
</feature>
<feature type="binding site" evidence="2">
    <location>
        <position position="76"/>
    </location>
    <ligand>
        <name>Zn(2+)</name>
        <dbReference type="ChEBI" id="CHEBI:29105"/>
        <label>1</label>
        <note>catalytic</note>
    </ligand>
</feature>
<feature type="binding site" evidence="2">
    <location>
        <position position="78"/>
    </location>
    <ligand>
        <name>Zn(2+)</name>
        <dbReference type="ChEBI" id="CHEBI:29105"/>
        <label>2</label>
        <note>catalytic</note>
    </ligand>
</feature>
<feature type="binding site" evidence="2">
    <location>
        <position position="79"/>
    </location>
    <ligand>
        <name>Zn(2+)</name>
        <dbReference type="ChEBI" id="CHEBI:29105"/>
        <label>2</label>
        <note>catalytic</note>
    </ligand>
</feature>
<feature type="binding site" evidence="2">
    <location>
        <position position="142"/>
    </location>
    <ligand>
        <name>Zn(2+)</name>
        <dbReference type="ChEBI" id="CHEBI:29105"/>
        <label>1</label>
        <note>catalytic</note>
    </ligand>
</feature>
<feature type="binding site" evidence="2">
    <location>
        <position position="164"/>
    </location>
    <ligand>
        <name>Zn(2+)</name>
        <dbReference type="ChEBI" id="CHEBI:29105"/>
        <label>1</label>
        <note>catalytic</note>
    </ligand>
</feature>
<feature type="binding site" evidence="2">
    <location>
        <position position="164"/>
    </location>
    <ligand>
        <name>Zn(2+)</name>
        <dbReference type="ChEBI" id="CHEBI:29105"/>
        <label>2</label>
        <note>catalytic</note>
    </ligand>
</feature>
<feature type="binding site" evidence="2">
    <location>
        <begin position="364"/>
        <end position="368"/>
    </location>
    <ligand>
        <name>substrate</name>
    </ligand>
</feature>
<feature type="binding site" evidence="2">
    <location>
        <position position="390"/>
    </location>
    <ligand>
        <name>Zn(2+)</name>
        <dbReference type="ChEBI" id="CHEBI:29105"/>
        <label>2</label>
        <note>catalytic</note>
    </ligand>
</feature>